<proteinExistence type="evidence at protein level"/>
<accession>Q9R117</accession>
<accession>O88431</accession>
<accession>Q3TXE3</accession>
<accession>Q52KQ2</accession>
<accession>Q8VE41</accession>
<organism>
    <name type="scientific">Mus musculus</name>
    <name type="common">Mouse</name>
    <dbReference type="NCBI Taxonomy" id="10090"/>
    <lineage>
        <taxon>Eukaryota</taxon>
        <taxon>Metazoa</taxon>
        <taxon>Chordata</taxon>
        <taxon>Craniata</taxon>
        <taxon>Vertebrata</taxon>
        <taxon>Euteleostomi</taxon>
        <taxon>Mammalia</taxon>
        <taxon>Eutheria</taxon>
        <taxon>Euarchontoglires</taxon>
        <taxon>Glires</taxon>
        <taxon>Rodentia</taxon>
        <taxon>Myomorpha</taxon>
        <taxon>Muroidea</taxon>
        <taxon>Muridae</taxon>
        <taxon>Murinae</taxon>
        <taxon>Mus</taxon>
        <taxon>Mus</taxon>
    </lineage>
</organism>
<keyword id="KW-0002">3D-structure</keyword>
<keyword id="KW-0067">ATP-binding</keyword>
<keyword id="KW-0903">Direct protein sequencing</keyword>
<keyword id="KW-0418">Kinase</keyword>
<keyword id="KW-0547">Nucleotide-binding</keyword>
<keyword id="KW-0597">Phosphoprotein</keyword>
<keyword id="KW-1185">Reference proteome</keyword>
<keyword id="KW-0677">Repeat</keyword>
<keyword id="KW-0727">SH2 domain</keyword>
<keyword id="KW-0808">Transferase</keyword>
<keyword id="KW-0829">Tyrosine-protein kinase</keyword>
<reference key="1">
    <citation type="journal article" date="2000" name="Immunity">
        <title>Partial impairment of cytokine responses in Tyk2-deficient mice.</title>
        <authorList>
            <person name="Karaghiosoff M."/>
            <person name="Neubauer H."/>
            <person name="Lassnig C."/>
            <person name="Kovarik P."/>
            <person name="Schindler H."/>
            <person name="Pircher H."/>
            <person name="McCoy B."/>
            <person name="Bogdan C."/>
            <person name="Decker T."/>
            <person name="Brem G."/>
            <person name="Pfeffer K."/>
            <person name="Mueller M."/>
        </authorList>
    </citation>
    <scope>NUCLEOTIDE SEQUENCE [MRNA]</scope>
    <source>
        <strain>129/Sv</strain>
        <tissue>Liver</tissue>
    </source>
</reference>
<reference key="2">
    <citation type="journal article" date="2005" name="Science">
        <title>The transcriptional landscape of the mammalian genome.</title>
        <authorList>
            <person name="Carninci P."/>
            <person name="Kasukawa T."/>
            <person name="Katayama S."/>
            <person name="Gough J."/>
            <person name="Frith M.C."/>
            <person name="Maeda N."/>
            <person name="Oyama R."/>
            <person name="Ravasi T."/>
            <person name="Lenhard B."/>
            <person name="Wells C."/>
            <person name="Kodzius R."/>
            <person name="Shimokawa K."/>
            <person name="Bajic V.B."/>
            <person name="Brenner S.E."/>
            <person name="Batalov S."/>
            <person name="Forrest A.R."/>
            <person name="Zavolan M."/>
            <person name="Davis M.J."/>
            <person name="Wilming L.G."/>
            <person name="Aidinis V."/>
            <person name="Allen J.E."/>
            <person name="Ambesi-Impiombato A."/>
            <person name="Apweiler R."/>
            <person name="Aturaliya R.N."/>
            <person name="Bailey T.L."/>
            <person name="Bansal M."/>
            <person name="Baxter L."/>
            <person name="Beisel K.W."/>
            <person name="Bersano T."/>
            <person name="Bono H."/>
            <person name="Chalk A.M."/>
            <person name="Chiu K.P."/>
            <person name="Choudhary V."/>
            <person name="Christoffels A."/>
            <person name="Clutterbuck D.R."/>
            <person name="Crowe M.L."/>
            <person name="Dalla E."/>
            <person name="Dalrymple B.P."/>
            <person name="de Bono B."/>
            <person name="Della Gatta G."/>
            <person name="di Bernardo D."/>
            <person name="Down T."/>
            <person name="Engstrom P."/>
            <person name="Fagiolini M."/>
            <person name="Faulkner G."/>
            <person name="Fletcher C.F."/>
            <person name="Fukushima T."/>
            <person name="Furuno M."/>
            <person name="Futaki S."/>
            <person name="Gariboldi M."/>
            <person name="Georgii-Hemming P."/>
            <person name="Gingeras T.R."/>
            <person name="Gojobori T."/>
            <person name="Green R.E."/>
            <person name="Gustincich S."/>
            <person name="Harbers M."/>
            <person name="Hayashi Y."/>
            <person name="Hensch T.K."/>
            <person name="Hirokawa N."/>
            <person name="Hill D."/>
            <person name="Huminiecki L."/>
            <person name="Iacono M."/>
            <person name="Ikeo K."/>
            <person name="Iwama A."/>
            <person name="Ishikawa T."/>
            <person name="Jakt M."/>
            <person name="Kanapin A."/>
            <person name="Katoh M."/>
            <person name="Kawasawa Y."/>
            <person name="Kelso J."/>
            <person name="Kitamura H."/>
            <person name="Kitano H."/>
            <person name="Kollias G."/>
            <person name="Krishnan S.P."/>
            <person name="Kruger A."/>
            <person name="Kummerfeld S.K."/>
            <person name="Kurochkin I.V."/>
            <person name="Lareau L.F."/>
            <person name="Lazarevic D."/>
            <person name="Lipovich L."/>
            <person name="Liu J."/>
            <person name="Liuni S."/>
            <person name="McWilliam S."/>
            <person name="Madan Babu M."/>
            <person name="Madera M."/>
            <person name="Marchionni L."/>
            <person name="Matsuda H."/>
            <person name="Matsuzawa S."/>
            <person name="Miki H."/>
            <person name="Mignone F."/>
            <person name="Miyake S."/>
            <person name="Morris K."/>
            <person name="Mottagui-Tabar S."/>
            <person name="Mulder N."/>
            <person name="Nakano N."/>
            <person name="Nakauchi H."/>
            <person name="Ng P."/>
            <person name="Nilsson R."/>
            <person name="Nishiguchi S."/>
            <person name="Nishikawa S."/>
            <person name="Nori F."/>
            <person name="Ohara O."/>
            <person name="Okazaki Y."/>
            <person name="Orlando V."/>
            <person name="Pang K.C."/>
            <person name="Pavan W.J."/>
            <person name="Pavesi G."/>
            <person name="Pesole G."/>
            <person name="Petrovsky N."/>
            <person name="Piazza S."/>
            <person name="Reed J."/>
            <person name="Reid J.F."/>
            <person name="Ring B.Z."/>
            <person name="Ringwald M."/>
            <person name="Rost B."/>
            <person name="Ruan Y."/>
            <person name="Salzberg S.L."/>
            <person name="Sandelin A."/>
            <person name="Schneider C."/>
            <person name="Schoenbach C."/>
            <person name="Sekiguchi K."/>
            <person name="Semple C.A."/>
            <person name="Seno S."/>
            <person name="Sessa L."/>
            <person name="Sheng Y."/>
            <person name="Shibata Y."/>
            <person name="Shimada H."/>
            <person name="Shimada K."/>
            <person name="Silva D."/>
            <person name="Sinclair B."/>
            <person name="Sperling S."/>
            <person name="Stupka E."/>
            <person name="Sugiura K."/>
            <person name="Sultana R."/>
            <person name="Takenaka Y."/>
            <person name="Taki K."/>
            <person name="Tammoja K."/>
            <person name="Tan S.L."/>
            <person name="Tang S."/>
            <person name="Taylor M.S."/>
            <person name="Tegner J."/>
            <person name="Teichmann S.A."/>
            <person name="Ueda H.R."/>
            <person name="van Nimwegen E."/>
            <person name="Verardo R."/>
            <person name="Wei C.L."/>
            <person name="Yagi K."/>
            <person name="Yamanishi H."/>
            <person name="Zabarovsky E."/>
            <person name="Zhu S."/>
            <person name="Zimmer A."/>
            <person name="Hide W."/>
            <person name="Bult C."/>
            <person name="Grimmond S.M."/>
            <person name="Teasdale R.D."/>
            <person name="Liu E.T."/>
            <person name="Brusic V."/>
            <person name="Quackenbush J."/>
            <person name="Wahlestedt C."/>
            <person name="Mattick J.S."/>
            <person name="Hume D.A."/>
            <person name="Kai C."/>
            <person name="Sasaki D."/>
            <person name="Tomaru Y."/>
            <person name="Fukuda S."/>
            <person name="Kanamori-Katayama M."/>
            <person name="Suzuki M."/>
            <person name="Aoki J."/>
            <person name="Arakawa T."/>
            <person name="Iida J."/>
            <person name="Imamura K."/>
            <person name="Itoh M."/>
            <person name="Kato T."/>
            <person name="Kawaji H."/>
            <person name="Kawagashira N."/>
            <person name="Kawashima T."/>
            <person name="Kojima M."/>
            <person name="Kondo S."/>
            <person name="Konno H."/>
            <person name="Nakano K."/>
            <person name="Ninomiya N."/>
            <person name="Nishio T."/>
            <person name="Okada M."/>
            <person name="Plessy C."/>
            <person name="Shibata K."/>
            <person name="Shiraki T."/>
            <person name="Suzuki S."/>
            <person name="Tagami M."/>
            <person name="Waki K."/>
            <person name="Watahiki A."/>
            <person name="Okamura-Oho Y."/>
            <person name="Suzuki H."/>
            <person name="Kawai J."/>
            <person name="Hayashizaki Y."/>
        </authorList>
    </citation>
    <scope>NUCLEOTIDE SEQUENCE [LARGE SCALE MRNA]</scope>
    <source>
        <strain evidence="10">C57BL/6J</strain>
    </source>
</reference>
<reference key="3">
    <citation type="journal article" date="2009" name="PLoS Biol.">
        <title>Lineage-specific biology revealed by a finished genome assembly of the mouse.</title>
        <authorList>
            <person name="Church D.M."/>
            <person name="Goodstadt L."/>
            <person name="Hillier L.W."/>
            <person name="Zody M.C."/>
            <person name="Goldstein S."/>
            <person name="She X."/>
            <person name="Bult C.J."/>
            <person name="Agarwala R."/>
            <person name="Cherry J.L."/>
            <person name="DiCuccio M."/>
            <person name="Hlavina W."/>
            <person name="Kapustin Y."/>
            <person name="Meric P."/>
            <person name="Maglott D."/>
            <person name="Birtle Z."/>
            <person name="Marques A.C."/>
            <person name="Graves T."/>
            <person name="Zhou S."/>
            <person name="Teague B."/>
            <person name="Potamousis K."/>
            <person name="Churas C."/>
            <person name="Place M."/>
            <person name="Herschleb J."/>
            <person name="Runnheim R."/>
            <person name="Forrest D."/>
            <person name="Amos-Landgraf J."/>
            <person name="Schwartz D.C."/>
            <person name="Cheng Z."/>
            <person name="Lindblad-Toh K."/>
            <person name="Eichler E.E."/>
            <person name="Ponting C.P."/>
        </authorList>
    </citation>
    <scope>NUCLEOTIDE SEQUENCE [LARGE SCALE GENOMIC DNA]</scope>
    <source>
        <strain>C57BL/6J</strain>
    </source>
</reference>
<reference key="4">
    <citation type="submission" date="2005-07" db="EMBL/GenBank/DDBJ databases">
        <authorList>
            <person name="Mural R.J."/>
            <person name="Adams M.D."/>
            <person name="Myers E.W."/>
            <person name="Smith H.O."/>
            <person name="Venter J.C."/>
        </authorList>
    </citation>
    <scope>NUCLEOTIDE SEQUENCE [LARGE SCALE GENOMIC DNA]</scope>
</reference>
<reference key="5">
    <citation type="journal article" date="2004" name="Genome Res.">
        <title>The status, quality, and expansion of the NIH full-length cDNA project: the Mammalian Gene Collection (MGC).</title>
        <authorList>
            <consortium name="The MGC Project Team"/>
        </authorList>
    </citation>
    <scope>NUCLEOTIDE SEQUENCE [LARGE SCALE MRNA]</scope>
    <source>
        <strain>C57BL/6J</strain>
        <tissue>Eye</tissue>
    </source>
</reference>
<reference key="6">
    <citation type="submission" date="2009-01" db="UniProtKB">
        <authorList>
            <person name="Lubec G."/>
            <person name="Sunyer B."/>
            <person name="Chen W.-Q."/>
        </authorList>
    </citation>
    <scope>PROTEIN SEQUENCE OF 736-741</scope>
    <scope>IDENTIFICATION BY MASS SPECTROMETRY</scope>
    <source>
        <strain>OF1</strain>
        <tissue>Hippocampus</tissue>
    </source>
</reference>
<reference key="7">
    <citation type="journal article" date="2000" name="Immunity">
        <title>Tyk2 plays a restricted role in IFN alpha signaling, although it is required for IL-12-mediated T cell function.</title>
        <authorList>
            <person name="Shimoda K."/>
            <person name="Kato K."/>
            <person name="Aoki K."/>
            <person name="Matsuda T."/>
            <person name="Miyamoto A."/>
            <person name="Shibamori M."/>
            <person name="Yamashita M."/>
            <person name="Numata A."/>
            <person name="Takase K."/>
            <person name="Kobayashi S."/>
            <person name="Shibata S."/>
            <person name="Asano Y."/>
            <person name="Gondo H."/>
            <person name="Sekiguchi K."/>
            <person name="Nakayama K."/>
            <person name="Nakayama T."/>
            <person name="Okamura T."/>
            <person name="Okamura S."/>
            <person name="Niho Y."/>
            <person name="Nakayama K."/>
        </authorList>
    </citation>
    <scope>FUNCTION</scope>
    <scope>DISRUPTION PHENOTYPE</scope>
</reference>
<reference key="8">
    <citation type="journal article" date="2007" name="J. Immunol.">
        <title>Quantitative time-resolved phosphoproteomic analysis of mast cell signaling.</title>
        <authorList>
            <person name="Cao L."/>
            <person name="Yu K."/>
            <person name="Banh C."/>
            <person name="Nguyen V."/>
            <person name="Ritz A."/>
            <person name="Raphael B.J."/>
            <person name="Kawakami Y."/>
            <person name="Kawakami T."/>
            <person name="Salomon A.R."/>
        </authorList>
    </citation>
    <scope>PHOSPHORYLATION [LARGE SCALE ANALYSIS] AT TYR-604</scope>
    <scope>IDENTIFICATION BY MASS SPECTROMETRY [LARGE SCALE ANALYSIS]</scope>
    <source>
        <tissue>Mast cell</tissue>
    </source>
</reference>
<reference key="9">
    <citation type="journal article" date="2010" name="Cell">
        <title>A tissue-specific atlas of mouse protein phosphorylation and expression.</title>
        <authorList>
            <person name="Huttlin E.L."/>
            <person name="Jedrychowski M.P."/>
            <person name="Elias J.E."/>
            <person name="Goswami T."/>
            <person name="Rad R."/>
            <person name="Beausoleil S.A."/>
            <person name="Villen J."/>
            <person name="Haas W."/>
            <person name="Sowa M.E."/>
            <person name="Gygi S.P."/>
        </authorList>
    </citation>
    <scope>PHOSPHORYLATION [LARGE SCALE ANALYSIS] AT SER-525</scope>
    <scope>IDENTIFICATION BY MASS SPECTROMETRY [LARGE SCALE ANALYSIS]</scope>
    <source>
        <tissue>Kidney</tissue>
        <tissue>Lung</tissue>
        <tissue>Spleen</tissue>
    </source>
</reference>
<reference key="10">
    <citation type="journal article" date="2012" name="FASEB J.">
        <title>Docking protein Gab2 regulates mucin expression and goblet cell hyperplasia through TYK2/STAT6 pathway.</title>
        <authorList>
            <person name="Zhang X."/>
            <person name="Zhang Y."/>
            <person name="Tao B."/>
            <person name="Wang D."/>
            <person name="Cheng H."/>
            <person name="Wang K."/>
            <person name="Zhou R."/>
            <person name="Xie Q."/>
            <person name="Ke Y."/>
        </authorList>
    </citation>
    <scope>FUNCTION IN STAT6 ACTIVATION</scope>
</reference>
<reference key="11">
    <citation type="journal article" date="2012" name="BMC Struct. Biol.">
        <title>Enabling structure-based drug design of Tyk2 through co-crystallization with a stabilizing aminoindazole inhibitor.</title>
        <authorList>
            <person name="Argiriadi M.A."/>
            <person name="Goedken E.R."/>
            <person name="Banach D."/>
            <person name="Borhani D.W."/>
            <person name="Burchat A."/>
            <person name="Dixon R.W."/>
            <person name="Marcotte D."/>
            <person name="Overmeyer G."/>
            <person name="Pivorunas V."/>
            <person name="Sadhukhan R."/>
            <person name="Sousa S."/>
            <person name="Moore N.S."/>
            <person name="Tomlinson M."/>
            <person name="Voss J."/>
            <person name="Wang L."/>
            <person name="Wishart N."/>
            <person name="Woller K."/>
            <person name="Talanian R.V."/>
        </authorList>
    </citation>
    <scope>X-RAY CRYSTALLOGRAPHY (2.5 ANGSTROMS) OF 884-1174 IN COMPLEX WITH INHIBITOR</scope>
</reference>
<sequence length="1184" mass="133315">MVGTMPLCGRRAILEDSKADGTEAQPLVPTGCLMVLLHWPGPEGGEPWVTFSQTSLTAEEVCIHIAHKVGITPPCLNLFALYNAQAKVWLPPNHILDTSQDMNLYFRMRFYFRNWHGMNPQEPAVYRCGFPGAETSSDRAEQGVQLLDSASFEYLFEQGKHEFMNDVVSLRDLSSEEEIHHFKNESLGMAFLHLCHLALSRGVPLEEMAREISFKNCIPHSFRQHIRQHNVLTRLRLHRVFRRFLRAFRPGHLSQQVVMVKYLATLERLAPRFGSERIPVCHLEVLAQPERDPCYIQNSGQTAGDPGPELPSGPPTHEVLVTGTGGIQWHPLQTQESERGNSRGNPHGSRSGKKPKAPKAGEHLTESPQEPPWTYFCDFQDISHVVLKERRVHIHLQDNKCLLLCLCSQAEALSFVALVDGYFRLTADSSHYLCHEVAPPRLVTSIQNGIHGPLMDPFVQAKLWPEDGLYLIQWSTSHLHRLILTVAHRNPAFSNGPRGLRLRKFPITQQPGAFVLDGWGRSFASLGDLRLALQGCSLRAGDDCFPLHHCCLPRPREISNLVIMRGSRAHTRPLNLSQLSFHRVHQDEITQLSHLGQGTRTNVYEGLLRVGGPDEGKVDNGCPPEPGGTSGQQLRVVLKVLDPSHHDIALAFYETASLMSQVSHMHLAFLHGVCVRGSENIIVTEFVEHGPLDVWLRRQRGQVPMTWKMVVAQQLASALSYLEDKNLVHGNVCGRNILLARLGLEEGTNPFIKLSDPGVGQGALSREERVERIPWTAPECLSGGTSSLGTATDMWGFGATLLEICFDGEAPLQGRGPSEKERFYTKKHQLPEPSSPELATLTRQCLTYEPAQRPSFRTILRDLTRLQPQNLVGTSAVNSDSPASDPTVFHKRYLKKIRDLGEGHFGKVSLYCYDPTNDGTGEMVAVKALKEGCGPQLRSGWQREIEILRTLYHEHIVKYKGCCEDQGEKSVQLVMEYVPLGSLRDYLPRHCVGLAQLLLFAQQICEGMAYLHAQHYIHRDLAARNVLLDNDRLVKIGDFGLAKAVPEGHEYYRVREDGDSPVFWYAPECLKECKFYYASDVWSFGVTLYELLTYCDSNQSPHMKFTELIGHTQGQMTVLRLTELLERGERLPRPDRCPCEIYHLMKNCWETEASFRPTFQNLVPILQTAQEKYQGQVPSVFSVC</sequence>
<comment type="function">
    <text evidence="1 6 7">Tyrosine kinase of the non-receptor type involved in numerous cytokines and interferons signaling, which regulates cell growth, development, cell migration, innate and adaptive immunity (PubMed:11070174). Plays both structural and catalytic roles in numerous interleukins and interferons (IFN-alpha/beta) signaling (By similarity). Associates with heterodimeric cytokine receptor complexes and activates STAT family members including STAT1, STAT3, STAT4 or STAT6 (PubMed:22859374). The heterodimeric cytokine receptor complexes are composed of (1) a TYK2-associated receptor chain (IFNAR1, IL12RB1, IL10RB or IL13RA1), and (2) a second receptor chain associated either with JAK1 or JAK2 (By similarity). In response to cytokine-binding to receptors, phosphorylates and activates receptors (IFNAR1, IL12RB1, IL10RB or IL13RA1), creating docking sites for STAT members (By similarity). In turn, recruited STATs are phosphorylated by TYK2 (or JAK1/JAK2 on the second receptor chain), form homo- and heterodimers, translocate to the nucleus, and regulate cytokine/growth factor responsive genes (By similarity). Negatively regulates STAT3 activity by promototing phosphorylation at a specific tyrosine that differs from the site used for signaling (By similarity).</text>
</comment>
<comment type="catalytic activity">
    <reaction evidence="1">
        <text>L-tyrosyl-[protein] + ATP = O-phospho-L-tyrosyl-[protein] + ADP + H(+)</text>
        <dbReference type="Rhea" id="RHEA:10596"/>
        <dbReference type="Rhea" id="RHEA-COMP:10136"/>
        <dbReference type="Rhea" id="RHEA-COMP:20101"/>
        <dbReference type="ChEBI" id="CHEBI:15378"/>
        <dbReference type="ChEBI" id="CHEBI:30616"/>
        <dbReference type="ChEBI" id="CHEBI:46858"/>
        <dbReference type="ChEBI" id="CHEBI:61978"/>
        <dbReference type="ChEBI" id="CHEBI:456216"/>
        <dbReference type="EC" id="2.7.10.2"/>
    </reaction>
</comment>
<comment type="activity regulation">
    <text evidence="1">The protein kinase 1 domain (also termed pseudokinase domain) mediates autoinhibition of the TYK2 kinase domain.</text>
</comment>
<comment type="subunit">
    <text evidence="1">Interacts (via FERM domain) with JAKMIP1. Interacts with PIK3R1; this interaction is important for cell migration. Interacts with MPL/TPOR (By similarity).</text>
</comment>
<comment type="PTM">
    <text evidence="1">Phosphorylation by JAK1 at Tyr-1051 and Tyr-1052 induces kinase activation.</text>
</comment>
<comment type="disruption phenotype">
    <text evidence="6">Deficient mice are viable and fertile but display multiple immunological defects, most prominently high sensitivity to infections and defective tumor surveillance. Absence of TYK2 results in increased resistance against allergic, autoimmune and inflammatory disease.</text>
</comment>
<comment type="similarity">
    <text evidence="3">Belongs to the protein kinase superfamily. Tyr protein kinase family. JAK subfamily.</text>
</comment>
<comment type="sequence caution" evidence="8">
    <conflict type="erroneous initiation">
        <sequence resource="EMBL-CDS" id="AAD49423"/>
    </conflict>
    <text>Truncated N-terminus.</text>
</comment>
<comment type="sequence caution" evidence="8">
    <conflict type="erroneous initiation">
        <sequence resource="EMBL-CDS" id="AAH94240"/>
    </conflict>
    <text>Truncated N-terminus.</text>
</comment>
<comment type="sequence caution" evidence="8">
    <conflict type="erroneous gene model prediction">
        <sequence resource="EMBL-CDS" id="EDL25160"/>
    </conflict>
</comment>
<protein>
    <recommendedName>
        <fullName>Non-receptor tyrosine-protein kinase TYK2</fullName>
        <ecNumber>2.7.10.2</ecNumber>
    </recommendedName>
</protein>
<gene>
    <name evidence="9" type="primary">Tyk2</name>
</gene>
<evidence type="ECO:0000250" key="1">
    <source>
        <dbReference type="UniProtKB" id="P29597"/>
    </source>
</evidence>
<evidence type="ECO:0000255" key="2">
    <source>
        <dbReference type="PROSITE-ProRule" id="PRU00084"/>
    </source>
</evidence>
<evidence type="ECO:0000255" key="3">
    <source>
        <dbReference type="PROSITE-ProRule" id="PRU00159"/>
    </source>
</evidence>
<evidence type="ECO:0000255" key="4">
    <source>
        <dbReference type="PROSITE-ProRule" id="PRU10028"/>
    </source>
</evidence>
<evidence type="ECO:0000256" key="5">
    <source>
        <dbReference type="SAM" id="MobiDB-lite"/>
    </source>
</evidence>
<evidence type="ECO:0000269" key="6">
    <source>
    </source>
</evidence>
<evidence type="ECO:0000269" key="7">
    <source>
    </source>
</evidence>
<evidence type="ECO:0000305" key="8"/>
<evidence type="ECO:0000312" key="9">
    <source>
        <dbReference type="EMBL" id="AAD49423.1"/>
    </source>
</evidence>
<evidence type="ECO:0000312" key="10">
    <source>
        <dbReference type="EMBL" id="BAE34973.1"/>
    </source>
</evidence>
<evidence type="ECO:0007744" key="11">
    <source>
    </source>
</evidence>
<evidence type="ECO:0007744" key="12">
    <source>
    </source>
</evidence>
<evidence type="ECO:0007829" key="13">
    <source>
        <dbReference type="PDB" id="4E1Z"/>
    </source>
</evidence>
<evidence type="ECO:0007829" key="14">
    <source>
        <dbReference type="PDB" id="4E20"/>
    </source>
</evidence>
<dbReference type="EC" id="2.7.10.2"/>
<dbReference type="EMBL" id="AF173032">
    <property type="protein sequence ID" value="AAD49423.1"/>
    <property type="status" value="ALT_INIT"/>
    <property type="molecule type" value="mRNA"/>
</dbReference>
<dbReference type="EMBL" id="AF052607">
    <property type="protein sequence ID" value="AAC34580.2"/>
    <property type="molecule type" value="Genomic_DNA"/>
</dbReference>
<dbReference type="EMBL" id="AK159303">
    <property type="protein sequence ID" value="BAE34973.1"/>
    <property type="molecule type" value="mRNA"/>
</dbReference>
<dbReference type="EMBL" id="AC163637">
    <property type="status" value="NOT_ANNOTATED_CDS"/>
    <property type="molecule type" value="Genomic_DNA"/>
</dbReference>
<dbReference type="EMBL" id="CH466522">
    <property type="protein sequence ID" value="EDL25160.1"/>
    <property type="status" value="ALT_SEQ"/>
    <property type="molecule type" value="Genomic_DNA"/>
</dbReference>
<dbReference type="EMBL" id="BC094240">
    <property type="protein sequence ID" value="AAH94240.1"/>
    <property type="status" value="ALT_INIT"/>
    <property type="molecule type" value="mRNA"/>
</dbReference>
<dbReference type="EMBL" id="BC019789">
    <property type="protein sequence ID" value="AAH19789.1"/>
    <property type="molecule type" value="mRNA"/>
</dbReference>
<dbReference type="CCDS" id="CCDS90510.1"/>
<dbReference type="RefSeq" id="NP_001408188.1">
    <property type="nucleotide sequence ID" value="NM_001421259.1"/>
</dbReference>
<dbReference type="RefSeq" id="NP_061263.2">
    <property type="nucleotide sequence ID" value="NM_018793.3"/>
</dbReference>
<dbReference type="RefSeq" id="XP_011240881.1">
    <property type="nucleotide sequence ID" value="XM_011242579.2"/>
</dbReference>
<dbReference type="PDB" id="4E1Z">
    <property type="method" value="X-ray"/>
    <property type="resolution" value="2.50 A"/>
    <property type="chains" value="A=884-1174"/>
</dbReference>
<dbReference type="PDB" id="4E20">
    <property type="method" value="X-ray"/>
    <property type="resolution" value="2.60 A"/>
    <property type="chains" value="A=885-1174"/>
</dbReference>
<dbReference type="PDBsum" id="4E1Z"/>
<dbReference type="PDBsum" id="4E20"/>
<dbReference type="SMR" id="Q9R117"/>
<dbReference type="ComplexPortal" id="CPX-388">
    <property type="entry name" value="Interleukin-12-receptor complex"/>
</dbReference>
<dbReference type="ComplexPortal" id="CPX-389">
    <property type="entry name" value="Interleukin-23-receptor complex"/>
</dbReference>
<dbReference type="FunCoup" id="Q9R117">
    <property type="interactions" value="1859"/>
</dbReference>
<dbReference type="STRING" id="10090.ENSMUSP00000150354"/>
<dbReference type="BindingDB" id="Q9R117"/>
<dbReference type="ChEMBL" id="CHEMBL2321619"/>
<dbReference type="DrugCentral" id="Q9R117"/>
<dbReference type="iPTMnet" id="Q9R117"/>
<dbReference type="PhosphoSitePlus" id="Q9R117"/>
<dbReference type="SwissPalm" id="Q9R117"/>
<dbReference type="PaxDb" id="10090-ENSMUSP00000001036"/>
<dbReference type="ProteomicsDB" id="298077"/>
<dbReference type="Pumba" id="Q9R117"/>
<dbReference type="Antibodypedia" id="716">
    <property type="antibodies" value="711 antibodies from 42 providers"/>
</dbReference>
<dbReference type="DNASU" id="54721"/>
<dbReference type="Ensembl" id="ENSMUST00000214454.2">
    <property type="protein sequence ID" value="ENSMUSP00000150214.2"/>
    <property type="gene ID" value="ENSMUSG00000032175.12"/>
</dbReference>
<dbReference type="GeneID" id="54721"/>
<dbReference type="KEGG" id="mmu:54721"/>
<dbReference type="UCSC" id="uc009oke.1">
    <property type="organism name" value="mouse"/>
</dbReference>
<dbReference type="AGR" id="MGI:1929470"/>
<dbReference type="CTD" id="7297"/>
<dbReference type="MGI" id="MGI:1929470">
    <property type="gene designation" value="Tyk2"/>
</dbReference>
<dbReference type="VEuPathDB" id="HostDB:ENSMUSG00000032175"/>
<dbReference type="eggNOG" id="KOG0197">
    <property type="taxonomic scope" value="Eukaryota"/>
</dbReference>
<dbReference type="GeneTree" id="ENSGT00940000159869"/>
<dbReference type="InParanoid" id="Q9R117"/>
<dbReference type="OrthoDB" id="1915767at2759"/>
<dbReference type="BRENDA" id="2.7.10.2">
    <property type="organism ID" value="3474"/>
</dbReference>
<dbReference type="Reactome" id="R-MMU-1059683">
    <property type="pathway name" value="Interleukin-6 signaling"/>
</dbReference>
<dbReference type="Reactome" id="R-MMU-110056">
    <property type="pathway name" value="MAPK3 (ERK1) activation"/>
</dbReference>
<dbReference type="Reactome" id="R-MMU-112411">
    <property type="pathway name" value="MAPK1 (ERK2) activation"/>
</dbReference>
<dbReference type="Reactome" id="R-MMU-6783783">
    <property type="pathway name" value="Interleukin-10 signaling"/>
</dbReference>
<dbReference type="Reactome" id="R-MMU-6785807">
    <property type="pathway name" value="Interleukin-4 and Interleukin-13 signaling"/>
</dbReference>
<dbReference type="Reactome" id="R-MMU-6788467">
    <property type="pathway name" value="IL-6-type cytokine receptor ligand interactions"/>
</dbReference>
<dbReference type="Reactome" id="R-MMU-8854691">
    <property type="pathway name" value="Interleukin-20 family signaling"/>
</dbReference>
<dbReference type="Reactome" id="R-MMU-8984722">
    <property type="pathway name" value="Interleukin-35 Signalling"/>
</dbReference>
<dbReference type="Reactome" id="R-MMU-9020591">
    <property type="pathway name" value="Interleukin-12 signaling"/>
</dbReference>
<dbReference type="Reactome" id="R-MMU-9020933">
    <property type="pathway name" value="Interleukin-23 signaling"/>
</dbReference>
<dbReference type="Reactome" id="R-MMU-9020956">
    <property type="pathway name" value="Interleukin-27 signaling"/>
</dbReference>
<dbReference type="Reactome" id="R-MMU-909733">
    <property type="pathway name" value="Interferon alpha/beta signaling"/>
</dbReference>
<dbReference type="Reactome" id="R-MMU-912694">
    <property type="pathway name" value="Regulation of IFNA/IFNB signaling"/>
</dbReference>
<dbReference type="Reactome" id="R-MMU-9674555">
    <property type="pathway name" value="Signaling by CSF3 (G-CSF)"/>
</dbReference>
<dbReference type="Reactome" id="R-MMU-9705462">
    <property type="pathway name" value="Inactivation of CSF3 (G-CSF) signaling"/>
</dbReference>
<dbReference type="BioGRID-ORCS" id="54721">
    <property type="hits" value="7 hits in 79 CRISPR screens"/>
</dbReference>
<dbReference type="ChiTaRS" id="Tyk2">
    <property type="organism name" value="mouse"/>
</dbReference>
<dbReference type="EvolutionaryTrace" id="Q9R117"/>
<dbReference type="PRO" id="PR:Q9R117"/>
<dbReference type="Proteomes" id="UP000000589">
    <property type="component" value="Chromosome 9"/>
</dbReference>
<dbReference type="RNAct" id="Q9R117">
    <property type="molecule type" value="protein"/>
</dbReference>
<dbReference type="Bgee" id="ENSMUSG00000032175">
    <property type="expression patterns" value="Expressed in granulocyte and 234 other cell types or tissues"/>
</dbReference>
<dbReference type="ExpressionAtlas" id="Q9R117">
    <property type="expression patterns" value="baseline and differential"/>
</dbReference>
<dbReference type="GO" id="GO:0005856">
    <property type="term" value="C:cytoskeleton"/>
    <property type="evidence" value="ECO:0007669"/>
    <property type="project" value="InterPro"/>
</dbReference>
<dbReference type="GO" id="GO:0005829">
    <property type="term" value="C:cytosol"/>
    <property type="evidence" value="ECO:0000304"/>
    <property type="project" value="Reactome"/>
</dbReference>
<dbReference type="GO" id="GO:0042022">
    <property type="term" value="C:interleukin-12 receptor complex"/>
    <property type="evidence" value="ECO:0000303"/>
    <property type="project" value="ComplexPortal"/>
</dbReference>
<dbReference type="GO" id="GO:0072536">
    <property type="term" value="C:interleukin-23 receptor complex"/>
    <property type="evidence" value="ECO:0000303"/>
    <property type="project" value="ComplexPortal"/>
</dbReference>
<dbReference type="GO" id="GO:0005634">
    <property type="term" value="C:nucleus"/>
    <property type="evidence" value="ECO:0007669"/>
    <property type="project" value="Ensembl"/>
</dbReference>
<dbReference type="GO" id="GO:0005886">
    <property type="term" value="C:plasma membrane"/>
    <property type="evidence" value="ECO:0000303"/>
    <property type="project" value="ComplexPortal"/>
</dbReference>
<dbReference type="GO" id="GO:0005524">
    <property type="term" value="F:ATP binding"/>
    <property type="evidence" value="ECO:0007669"/>
    <property type="project" value="UniProtKB-KW"/>
</dbReference>
<dbReference type="GO" id="GO:0005131">
    <property type="term" value="F:growth hormone receptor binding"/>
    <property type="evidence" value="ECO:0007669"/>
    <property type="project" value="Ensembl"/>
</dbReference>
<dbReference type="GO" id="GO:0004715">
    <property type="term" value="F:non-membrane spanning protein tyrosine kinase activity"/>
    <property type="evidence" value="ECO:0007669"/>
    <property type="project" value="UniProtKB-EC"/>
</dbReference>
<dbReference type="GO" id="GO:0008283">
    <property type="term" value="P:cell population proliferation"/>
    <property type="evidence" value="ECO:0000316"/>
    <property type="project" value="MGI"/>
</dbReference>
<dbReference type="GO" id="GO:0007259">
    <property type="term" value="P:cell surface receptor signaling pathway via JAK-STAT"/>
    <property type="evidence" value="ECO:0007669"/>
    <property type="project" value="Ensembl"/>
</dbReference>
<dbReference type="GO" id="GO:0006955">
    <property type="term" value="P:immune response"/>
    <property type="evidence" value="ECO:0000303"/>
    <property type="project" value="ComplexPortal"/>
</dbReference>
<dbReference type="GO" id="GO:0140105">
    <property type="term" value="P:interleukin-10-mediated signaling pathway"/>
    <property type="evidence" value="ECO:0007669"/>
    <property type="project" value="Ensembl"/>
</dbReference>
<dbReference type="GO" id="GO:0035722">
    <property type="term" value="P:interleukin-12-mediated signaling pathway"/>
    <property type="evidence" value="ECO:0007669"/>
    <property type="project" value="Ensembl"/>
</dbReference>
<dbReference type="GO" id="GO:0038155">
    <property type="term" value="P:interleukin-23-mediated signaling pathway"/>
    <property type="evidence" value="ECO:0007669"/>
    <property type="project" value="Ensembl"/>
</dbReference>
<dbReference type="GO" id="GO:0035556">
    <property type="term" value="P:intracellular signal transduction"/>
    <property type="evidence" value="ECO:0007669"/>
    <property type="project" value="InterPro"/>
</dbReference>
<dbReference type="GO" id="GO:0032740">
    <property type="term" value="P:positive regulation of interleukin-17 production"/>
    <property type="evidence" value="ECO:0000303"/>
    <property type="project" value="ComplexPortal"/>
</dbReference>
<dbReference type="GO" id="GO:0032819">
    <property type="term" value="P:positive regulation of natural killer cell proliferation"/>
    <property type="evidence" value="ECO:0000266"/>
    <property type="project" value="ComplexPortal"/>
</dbReference>
<dbReference type="GO" id="GO:0051142">
    <property type="term" value="P:positive regulation of NK T cell proliferation"/>
    <property type="evidence" value="ECO:0000266"/>
    <property type="project" value="ComplexPortal"/>
</dbReference>
<dbReference type="GO" id="GO:1900182">
    <property type="term" value="P:positive regulation of protein localization to nucleus"/>
    <property type="evidence" value="ECO:0007669"/>
    <property type="project" value="Ensembl"/>
</dbReference>
<dbReference type="GO" id="GO:0046427">
    <property type="term" value="P:positive regulation of receptor signaling pathway via JAK-STAT"/>
    <property type="evidence" value="ECO:0000266"/>
    <property type="project" value="ComplexPortal"/>
</dbReference>
<dbReference type="GO" id="GO:0042102">
    <property type="term" value="P:positive regulation of T cell proliferation"/>
    <property type="evidence" value="ECO:0000314"/>
    <property type="project" value="ComplexPortal"/>
</dbReference>
<dbReference type="GO" id="GO:2000318">
    <property type="term" value="P:positive regulation of T-helper 17 type immune response"/>
    <property type="evidence" value="ECO:0000303"/>
    <property type="project" value="ComplexPortal"/>
</dbReference>
<dbReference type="GO" id="GO:0032729">
    <property type="term" value="P:positive regulation of type II interferon production"/>
    <property type="evidence" value="ECO:0000266"/>
    <property type="project" value="ComplexPortal"/>
</dbReference>
<dbReference type="GO" id="GO:0060337">
    <property type="term" value="P:type I interferon-mediated signaling pathway"/>
    <property type="evidence" value="ECO:0007669"/>
    <property type="project" value="Ensembl"/>
</dbReference>
<dbReference type="GO" id="GO:0060333">
    <property type="term" value="P:type II interferon-mediated signaling pathway"/>
    <property type="evidence" value="ECO:0007669"/>
    <property type="project" value="Ensembl"/>
</dbReference>
<dbReference type="CDD" id="cd05080">
    <property type="entry name" value="PTKc_Tyk2_rpt2"/>
    <property type="match status" value="1"/>
</dbReference>
<dbReference type="FunFam" id="3.30.200.20:FF:000084">
    <property type="entry name" value="Tyrosine-protein kinase"/>
    <property type="match status" value="1"/>
</dbReference>
<dbReference type="FunFam" id="1.10.510.10:FF:000114">
    <property type="entry name" value="Tyrosine-protein kinase JAK2"/>
    <property type="match status" value="1"/>
</dbReference>
<dbReference type="Gene3D" id="3.30.200.20">
    <property type="entry name" value="Phosphorylase Kinase, domain 1"/>
    <property type="match status" value="2"/>
</dbReference>
<dbReference type="Gene3D" id="1.10.510.10">
    <property type="entry name" value="Transferase(Phosphotransferase) domain 1"/>
    <property type="match status" value="2"/>
</dbReference>
<dbReference type="InterPro" id="IPR019749">
    <property type="entry name" value="Band_41_domain"/>
</dbReference>
<dbReference type="InterPro" id="IPR035963">
    <property type="entry name" value="FERM_2"/>
</dbReference>
<dbReference type="InterPro" id="IPR000299">
    <property type="entry name" value="FERM_domain"/>
</dbReference>
<dbReference type="InterPro" id="IPR041155">
    <property type="entry name" value="FERM_F1"/>
</dbReference>
<dbReference type="InterPro" id="IPR041046">
    <property type="entry name" value="FERM_F2"/>
</dbReference>
<dbReference type="InterPro" id="IPR051286">
    <property type="entry name" value="JAK"/>
</dbReference>
<dbReference type="InterPro" id="IPR041381">
    <property type="entry name" value="JAK1-3/TYK2_PHL_dom"/>
</dbReference>
<dbReference type="InterPro" id="IPR011009">
    <property type="entry name" value="Kinase-like_dom_sf"/>
</dbReference>
<dbReference type="InterPro" id="IPR000719">
    <property type="entry name" value="Prot_kinase_dom"/>
</dbReference>
<dbReference type="InterPro" id="IPR017441">
    <property type="entry name" value="Protein_kinase_ATP_BS"/>
</dbReference>
<dbReference type="InterPro" id="IPR001245">
    <property type="entry name" value="Ser-Thr/Tyr_kinase_cat_dom"/>
</dbReference>
<dbReference type="InterPro" id="IPR000980">
    <property type="entry name" value="SH2"/>
</dbReference>
<dbReference type="InterPro" id="IPR036860">
    <property type="entry name" value="SH2_dom_sf"/>
</dbReference>
<dbReference type="InterPro" id="IPR008266">
    <property type="entry name" value="Tyr_kinase_AS"/>
</dbReference>
<dbReference type="InterPro" id="IPR020635">
    <property type="entry name" value="Tyr_kinase_cat_dom"/>
</dbReference>
<dbReference type="InterPro" id="IPR016251">
    <property type="entry name" value="Tyr_kinase_non-rcpt_Jak/Tyk2"/>
</dbReference>
<dbReference type="InterPro" id="IPR016045">
    <property type="entry name" value="Tyr_kinase_non-rcpt_TYK2_N"/>
</dbReference>
<dbReference type="PANTHER" id="PTHR45807:SF6">
    <property type="entry name" value="NON-RECEPTOR TYROSINE-PROTEIN KINASE TYK2"/>
    <property type="match status" value="1"/>
</dbReference>
<dbReference type="PANTHER" id="PTHR45807">
    <property type="entry name" value="TYROSINE-PROTEIN KINASE HOPSCOTCH"/>
    <property type="match status" value="1"/>
</dbReference>
<dbReference type="Pfam" id="PF18379">
    <property type="entry name" value="FERM_F1"/>
    <property type="match status" value="1"/>
</dbReference>
<dbReference type="Pfam" id="PF18377">
    <property type="entry name" value="FERM_F2"/>
    <property type="match status" value="1"/>
</dbReference>
<dbReference type="Pfam" id="PF17887">
    <property type="entry name" value="Jak1_Phl"/>
    <property type="match status" value="1"/>
</dbReference>
<dbReference type="Pfam" id="PF07714">
    <property type="entry name" value="PK_Tyr_Ser-Thr"/>
    <property type="match status" value="2"/>
</dbReference>
<dbReference type="Pfam" id="PF21990">
    <property type="entry name" value="SH2_1"/>
    <property type="match status" value="1"/>
</dbReference>
<dbReference type="PIRSF" id="PIRSF000636">
    <property type="entry name" value="TyrPK_Jak"/>
    <property type="match status" value="1"/>
</dbReference>
<dbReference type="PRINTS" id="PR01823">
    <property type="entry name" value="JANUSKINASE"/>
</dbReference>
<dbReference type="PRINTS" id="PR00109">
    <property type="entry name" value="TYRKINASE"/>
</dbReference>
<dbReference type="PRINTS" id="PR01827">
    <property type="entry name" value="YKINASETYK2"/>
</dbReference>
<dbReference type="SMART" id="SM00295">
    <property type="entry name" value="B41"/>
    <property type="match status" value="1"/>
</dbReference>
<dbReference type="SMART" id="SM00219">
    <property type="entry name" value="TyrKc"/>
    <property type="match status" value="2"/>
</dbReference>
<dbReference type="SUPFAM" id="SSF50729">
    <property type="entry name" value="PH domain-like"/>
    <property type="match status" value="1"/>
</dbReference>
<dbReference type="SUPFAM" id="SSF56112">
    <property type="entry name" value="Protein kinase-like (PK-like)"/>
    <property type="match status" value="2"/>
</dbReference>
<dbReference type="SUPFAM" id="SSF47031">
    <property type="entry name" value="Second domain of FERM"/>
    <property type="match status" value="1"/>
</dbReference>
<dbReference type="SUPFAM" id="SSF55550">
    <property type="entry name" value="SH2 domain"/>
    <property type="match status" value="1"/>
</dbReference>
<dbReference type="PROSITE" id="PS50057">
    <property type="entry name" value="FERM_3"/>
    <property type="match status" value="1"/>
</dbReference>
<dbReference type="PROSITE" id="PS00107">
    <property type="entry name" value="PROTEIN_KINASE_ATP"/>
    <property type="match status" value="1"/>
</dbReference>
<dbReference type="PROSITE" id="PS50011">
    <property type="entry name" value="PROTEIN_KINASE_DOM"/>
    <property type="match status" value="2"/>
</dbReference>
<dbReference type="PROSITE" id="PS00109">
    <property type="entry name" value="PROTEIN_KINASE_TYR"/>
    <property type="match status" value="1"/>
</dbReference>
<name>TYK2_MOUSE</name>
<feature type="chain" id="PRO_0000088178" description="Non-receptor tyrosine-protein kinase TYK2">
    <location>
        <begin position="1"/>
        <end position="1184"/>
    </location>
</feature>
<feature type="domain" description="FERM" evidence="2">
    <location>
        <begin position="33"/>
        <end position="430"/>
    </location>
</feature>
<feature type="domain" description="SH2; atypical">
    <location>
        <begin position="449"/>
        <end position="529"/>
    </location>
</feature>
<feature type="domain" description="Protein kinase 1" evidence="3">
    <location>
        <begin position="589"/>
        <end position="866"/>
    </location>
</feature>
<feature type="domain" description="Protein kinase 2" evidence="3">
    <location>
        <begin position="894"/>
        <end position="1166"/>
    </location>
</feature>
<feature type="region of interest" description="Disordered" evidence="5">
    <location>
        <begin position="294"/>
        <end position="368"/>
    </location>
</feature>
<feature type="active site" description="Proton acceptor" evidence="3 4">
    <location>
        <position position="1020"/>
    </location>
</feature>
<feature type="binding site" evidence="3">
    <location>
        <begin position="900"/>
        <end position="908"/>
    </location>
    <ligand>
        <name>ATP</name>
        <dbReference type="ChEBI" id="CHEBI:30616"/>
    </ligand>
</feature>
<feature type="binding site" evidence="3">
    <location>
        <position position="927"/>
    </location>
    <ligand>
        <name>ATP</name>
        <dbReference type="ChEBI" id="CHEBI:30616"/>
    </ligand>
</feature>
<feature type="modified residue" description="Phosphotyrosine" evidence="1">
    <location>
        <position position="295"/>
    </location>
</feature>
<feature type="modified residue" description="Phosphoserine" evidence="12">
    <location>
        <position position="525"/>
    </location>
</feature>
<feature type="modified residue" description="Phosphotyrosine" evidence="11">
    <location>
        <position position="604"/>
    </location>
</feature>
<feature type="modified residue" description="Phosphoserine" evidence="1">
    <location>
        <position position="881"/>
    </location>
</feature>
<feature type="modified residue" description="Phosphotyrosine; by autocatalysis" evidence="1">
    <location>
        <position position="1051"/>
    </location>
</feature>
<feature type="modified residue" description="Phosphotyrosine" evidence="1">
    <location>
        <position position="1052"/>
    </location>
</feature>
<feature type="sequence conflict" description="In Ref. 1; AAC34580." evidence="8" ref="1">
    <original>C</original>
    <variation>F</variation>
    <location>
        <position position="195"/>
    </location>
</feature>
<feature type="sequence conflict" description="In Ref. 1; AAC34580." evidence="8" ref="1">
    <original>H</original>
    <variation>R</variation>
    <location>
        <position position="238"/>
    </location>
</feature>
<feature type="sequence conflict" description="In Ref. 1; AAC34580." evidence="8" ref="1">
    <original>K</original>
    <variation>E</variation>
    <location>
        <position position="359"/>
    </location>
</feature>
<feature type="sequence conflict" description="In Ref. 1; AAC34580." ref="1">
    <original>S</original>
    <variation>C</variation>
    <location>
        <position position="835"/>
    </location>
</feature>
<feature type="sequence conflict" description="In Ref. 1; AAC34580." ref="1">
    <original>M</original>
    <variation>T</variation>
    <location>
        <position position="1103"/>
    </location>
</feature>
<feature type="helix" evidence="13">
    <location>
        <begin position="891"/>
        <end position="893"/>
    </location>
</feature>
<feature type="strand" evidence="13">
    <location>
        <begin position="894"/>
        <end position="902"/>
    </location>
</feature>
<feature type="strand" evidence="13">
    <location>
        <begin position="904"/>
        <end position="913"/>
    </location>
</feature>
<feature type="strand" evidence="14">
    <location>
        <begin position="917"/>
        <end position="919"/>
    </location>
</feature>
<feature type="strand" evidence="13">
    <location>
        <begin position="922"/>
        <end position="929"/>
    </location>
</feature>
<feature type="helix" evidence="13">
    <location>
        <begin position="935"/>
        <end position="950"/>
    </location>
</feature>
<feature type="strand" evidence="13">
    <location>
        <begin position="959"/>
        <end position="964"/>
    </location>
</feature>
<feature type="strand" evidence="13">
    <location>
        <begin position="971"/>
        <end position="976"/>
    </location>
</feature>
<feature type="helix" evidence="13">
    <location>
        <begin position="983"/>
        <end position="986"/>
    </location>
</feature>
<feature type="helix" evidence="13">
    <location>
        <begin position="987"/>
        <end position="989"/>
    </location>
</feature>
<feature type="helix" evidence="13">
    <location>
        <begin position="994"/>
        <end position="1013"/>
    </location>
</feature>
<feature type="helix" evidence="13">
    <location>
        <begin position="1023"/>
        <end position="1025"/>
    </location>
</feature>
<feature type="strand" evidence="13">
    <location>
        <begin position="1026"/>
        <end position="1028"/>
    </location>
</feature>
<feature type="helix" evidence="13">
    <location>
        <begin position="1030"/>
        <end position="1032"/>
    </location>
</feature>
<feature type="strand" evidence="13">
    <location>
        <begin position="1034"/>
        <end position="1036"/>
    </location>
</feature>
<feature type="strand" evidence="13">
    <location>
        <begin position="1050"/>
        <end position="1053"/>
    </location>
</feature>
<feature type="strand" evidence="13">
    <location>
        <begin position="1058"/>
        <end position="1060"/>
    </location>
</feature>
<feature type="helix" evidence="13">
    <location>
        <begin position="1062"/>
        <end position="1064"/>
    </location>
</feature>
<feature type="helix" evidence="13">
    <location>
        <begin position="1067"/>
        <end position="1071"/>
    </location>
</feature>
<feature type="strand" evidence="13">
    <location>
        <begin position="1074"/>
        <end position="1076"/>
    </location>
</feature>
<feature type="helix" evidence="13">
    <location>
        <begin position="1077"/>
        <end position="1092"/>
    </location>
</feature>
<feature type="turn" evidence="13">
    <location>
        <begin position="1093"/>
        <end position="1095"/>
    </location>
</feature>
<feature type="helix" evidence="14">
    <location>
        <begin position="1097"/>
        <end position="1099"/>
    </location>
</feature>
<feature type="helix" evidence="13">
    <location>
        <begin position="1101"/>
        <end position="1109"/>
    </location>
</feature>
<feature type="helix" evidence="13">
    <location>
        <begin position="1114"/>
        <end position="1127"/>
    </location>
</feature>
<feature type="helix" evidence="13">
    <location>
        <begin position="1139"/>
        <end position="1148"/>
    </location>
</feature>
<feature type="helix" evidence="13">
    <location>
        <begin position="1153"/>
        <end position="1155"/>
    </location>
</feature>
<feature type="helix" evidence="13">
    <location>
        <begin position="1159"/>
        <end position="1172"/>
    </location>
</feature>